<sequence>MTEIVKVREQLQISLSDFQEQASLQSGQIFVVGCSTSEVLGERIGTSGTMEVAEAIFSELKQFQEQTGIELAFQCCEHLNRALVVERELAMKYQFEIVTVTPVRSAGGALATYAYHNLKDPVVIEFIKADAGMDIGDTFIGMHLKHVAVPVRTSVKEIGSAHVTMATTRGKLIGGARAVYAAKEETITCR</sequence>
<organism>
    <name type="scientific">Bacillus thuringiensis subsp. konkukian (strain 97-27)</name>
    <dbReference type="NCBI Taxonomy" id="281309"/>
    <lineage>
        <taxon>Bacteria</taxon>
        <taxon>Bacillati</taxon>
        <taxon>Bacillota</taxon>
        <taxon>Bacilli</taxon>
        <taxon>Bacillales</taxon>
        <taxon>Bacillaceae</taxon>
        <taxon>Bacillus</taxon>
        <taxon>Bacillus cereus group</taxon>
    </lineage>
</organism>
<accession>Q6HAW8</accession>
<gene>
    <name type="ordered locus">BT9727_4999</name>
</gene>
<evidence type="ECO:0000255" key="1">
    <source>
        <dbReference type="HAMAP-Rule" id="MF_00800"/>
    </source>
</evidence>
<feature type="chain" id="PRO_0000213004" description="UPF0340 protein BT9727_4999">
    <location>
        <begin position="1"/>
        <end position="190"/>
    </location>
</feature>
<reference key="1">
    <citation type="journal article" date="2006" name="J. Bacteriol.">
        <title>Pathogenomic sequence analysis of Bacillus cereus and Bacillus thuringiensis isolates closely related to Bacillus anthracis.</title>
        <authorList>
            <person name="Han C.S."/>
            <person name="Xie G."/>
            <person name="Challacombe J.F."/>
            <person name="Altherr M.R."/>
            <person name="Bhotika S.S."/>
            <person name="Bruce D."/>
            <person name="Campbell C.S."/>
            <person name="Campbell M.L."/>
            <person name="Chen J."/>
            <person name="Chertkov O."/>
            <person name="Cleland C."/>
            <person name="Dimitrijevic M."/>
            <person name="Doggett N.A."/>
            <person name="Fawcett J.J."/>
            <person name="Glavina T."/>
            <person name="Goodwin L.A."/>
            <person name="Hill K.K."/>
            <person name="Hitchcock P."/>
            <person name="Jackson P.J."/>
            <person name="Keim P."/>
            <person name="Kewalramani A.R."/>
            <person name="Longmire J."/>
            <person name="Lucas S."/>
            <person name="Malfatti S."/>
            <person name="McMurry K."/>
            <person name="Meincke L.J."/>
            <person name="Misra M."/>
            <person name="Moseman B.L."/>
            <person name="Mundt M."/>
            <person name="Munk A.C."/>
            <person name="Okinaka R.T."/>
            <person name="Parson-Quintana B."/>
            <person name="Reilly L.P."/>
            <person name="Richardson P."/>
            <person name="Robinson D.L."/>
            <person name="Rubin E."/>
            <person name="Saunders E."/>
            <person name="Tapia R."/>
            <person name="Tesmer J.G."/>
            <person name="Thayer N."/>
            <person name="Thompson L.S."/>
            <person name="Tice H."/>
            <person name="Ticknor L.O."/>
            <person name="Wills P.L."/>
            <person name="Brettin T.S."/>
            <person name="Gilna P."/>
        </authorList>
    </citation>
    <scope>NUCLEOTIDE SEQUENCE [LARGE SCALE GENOMIC DNA]</scope>
    <source>
        <strain>97-27</strain>
    </source>
</reference>
<comment type="similarity">
    <text evidence="1">Belongs to the UPF0340 family.</text>
</comment>
<name>Y4999_BACHK</name>
<protein>
    <recommendedName>
        <fullName evidence="1">UPF0340 protein BT9727_4999</fullName>
    </recommendedName>
</protein>
<dbReference type="EMBL" id="AE017355">
    <property type="protein sequence ID" value="AAT61116.1"/>
    <property type="molecule type" value="Genomic_DNA"/>
</dbReference>
<dbReference type="RefSeq" id="WP_000136366.1">
    <property type="nucleotide sequence ID" value="NC_005957.1"/>
</dbReference>
<dbReference type="RefSeq" id="YP_039308.1">
    <property type="nucleotide sequence ID" value="NC_005957.1"/>
</dbReference>
<dbReference type="SMR" id="Q6HAW8"/>
<dbReference type="KEGG" id="btk:BT9727_4999"/>
<dbReference type="PATRIC" id="fig|281309.8.peg.5317"/>
<dbReference type="HOGENOM" id="CLU_106658_0_0_9"/>
<dbReference type="Proteomes" id="UP000001301">
    <property type="component" value="Chromosome"/>
</dbReference>
<dbReference type="Gene3D" id="3.40.50.10360">
    <property type="entry name" value="Hypothetical protein TT1679"/>
    <property type="match status" value="1"/>
</dbReference>
<dbReference type="HAMAP" id="MF_00800">
    <property type="entry name" value="UPF0340"/>
    <property type="match status" value="1"/>
</dbReference>
<dbReference type="InterPro" id="IPR028345">
    <property type="entry name" value="Antibiotic_NAT-like"/>
</dbReference>
<dbReference type="InterPro" id="IPR006340">
    <property type="entry name" value="DUF436"/>
</dbReference>
<dbReference type="NCBIfam" id="TIGR01440">
    <property type="entry name" value="TIGR01440 family protein"/>
    <property type="match status" value="1"/>
</dbReference>
<dbReference type="Pfam" id="PF04260">
    <property type="entry name" value="DUF436"/>
    <property type="match status" value="1"/>
</dbReference>
<dbReference type="PIRSF" id="PIRSF007510">
    <property type="entry name" value="UCP007510"/>
    <property type="match status" value="1"/>
</dbReference>
<dbReference type="SUPFAM" id="SSF110710">
    <property type="entry name" value="TTHA0583/YokD-like"/>
    <property type="match status" value="1"/>
</dbReference>
<proteinExistence type="inferred from homology"/>